<dbReference type="EMBL" id="J02090">
    <property type="protein sequence ID" value="AAA43178.1"/>
    <property type="molecule type" value="Genomic_RNA"/>
</dbReference>
<dbReference type="EMBL" id="V01085">
    <property type="protein sequence ID" value="CAA24269.1"/>
    <property type="molecule type" value="Genomic_RNA"/>
</dbReference>
<dbReference type="EMBL" id="M55059">
    <property type="protein sequence ID" value="AAA43239.1"/>
    <property type="molecule type" value="Genomic_RNA"/>
</dbReference>
<dbReference type="EMBL" id="AB284320">
    <property type="protein sequence ID" value="BAF37221.1"/>
    <property type="molecule type" value="Genomic_RNA"/>
</dbReference>
<dbReference type="PIR" id="A93231">
    <property type="entry name" value="HMIVHA"/>
</dbReference>
<dbReference type="PDB" id="1EO8">
    <property type="method" value="X-ray"/>
    <property type="resolution" value="2.80 A"/>
    <property type="chains" value="A=17-344, B=346-520"/>
</dbReference>
<dbReference type="PDB" id="1FYT">
    <property type="method" value="X-ray"/>
    <property type="resolution" value="2.60 A"/>
    <property type="chains" value="C=322-334"/>
</dbReference>
<dbReference type="PDB" id="1HA0">
    <property type="method" value="X-ray"/>
    <property type="resolution" value="2.80 A"/>
    <property type="chains" value="A=25-518"/>
</dbReference>
<dbReference type="PDB" id="1HGG">
    <property type="method" value="X-ray"/>
    <property type="resolution" value="2.90 A"/>
    <property type="chains" value="A/C/E=17-344, B/D/F=346-520"/>
</dbReference>
<dbReference type="PDB" id="1HTM">
    <property type="method" value="X-ray"/>
    <property type="resolution" value="2.50 A"/>
    <property type="chains" value="A/C/E=17-43, B/D/F=383-520"/>
</dbReference>
<dbReference type="PDB" id="1J8H">
    <property type="method" value="X-ray"/>
    <property type="resolution" value="2.40 A"/>
    <property type="chains" value="C=322-334"/>
</dbReference>
<dbReference type="PDB" id="1KEN">
    <property type="method" value="X-ray"/>
    <property type="resolution" value="3.50 A"/>
    <property type="chains" value="B/D/F=346-520"/>
</dbReference>
<dbReference type="PDB" id="1KG0">
    <property type="method" value="X-ray"/>
    <property type="resolution" value="2.65 A"/>
    <property type="chains" value="D=322-334"/>
</dbReference>
<dbReference type="PDB" id="1PYW">
    <property type="method" value="X-ray"/>
    <property type="resolution" value="2.10 A"/>
    <property type="chains" value="C=324-332"/>
</dbReference>
<dbReference type="PDB" id="1QFU">
    <property type="method" value="X-ray"/>
    <property type="resolution" value="2.80 A"/>
    <property type="chains" value="B=346-520"/>
</dbReference>
<dbReference type="PDB" id="1QU1">
    <property type="method" value="X-ray"/>
    <property type="resolution" value="1.90 A"/>
    <property type="chains" value="A/B/C/D/E/F=376-530"/>
</dbReference>
<dbReference type="PDB" id="2HMG">
    <property type="method" value="X-ray"/>
    <property type="resolution" value="3.00 A"/>
    <property type="chains" value="A/C/E=17-344, B/D/F=346-520"/>
</dbReference>
<dbReference type="PDB" id="2VIR">
    <property type="method" value="X-ray"/>
    <property type="resolution" value="3.25 A"/>
    <property type="chains" value="C=44-325"/>
</dbReference>
<dbReference type="PDB" id="2VIS">
    <property type="method" value="X-ray"/>
    <property type="resolution" value="3.25 A"/>
    <property type="chains" value="C=44-325"/>
</dbReference>
<dbReference type="PDB" id="2VIT">
    <property type="method" value="X-ray"/>
    <property type="resolution" value="3.25 A"/>
    <property type="chains" value="C=44-325"/>
</dbReference>
<dbReference type="PDB" id="2VIU">
    <property type="method" value="X-ray"/>
    <property type="resolution" value="2.50 A"/>
    <property type="chains" value="A=17-344, B=346-520"/>
</dbReference>
<dbReference type="PDB" id="2YPG">
    <property type="method" value="X-ray"/>
    <property type="resolution" value="2.85 A"/>
    <property type="chains" value="A/C/E=17-344, B/D/F=346-520"/>
</dbReference>
<dbReference type="PDB" id="3EYM">
    <property type="method" value="X-ray"/>
    <property type="resolution" value="2.80 A"/>
    <property type="chains" value="A/C/E=25-345, B/D/F=346-517"/>
</dbReference>
<dbReference type="PDB" id="3HMG">
    <property type="method" value="X-ray"/>
    <property type="resolution" value="2.90 A"/>
    <property type="chains" value="A/C/E=17-344, B/D/F=346-520"/>
</dbReference>
<dbReference type="PDB" id="3S4S">
    <property type="method" value="X-ray"/>
    <property type="resolution" value="2.40 A"/>
    <property type="chains" value="C/F=322-334"/>
</dbReference>
<dbReference type="PDB" id="3S5L">
    <property type="method" value="X-ray"/>
    <property type="resolution" value="2.10 A"/>
    <property type="chains" value="C/F=322-334"/>
</dbReference>
<dbReference type="PDB" id="3VUN">
    <property type="method" value="X-ray"/>
    <property type="resolution" value="3.00 A"/>
    <property type="chains" value="A/C/E=17-345, B/D/F=346-520"/>
</dbReference>
<dbReference type="PDB" id="4C56">
    <property type="method" value="X-ray"/>
    <property type="resolution" value="2.90 A"/>
    <property type="chains" value="F/L=322-334"/>
</dbReference>
<dbReference type="PDB" id="4HMG">
    <property type="method" value="X-ray"/>
    <property type="resolution" value="3.00 A"/>
    <property type="chains" value="A/C/E=17-344, B/D/F=346-520"/>
</dbReference>
<dbReference type="PDB" id="5HMG">
    <property type="method" value="X-ray"/>
    <property type="resolution" value="3.20 A"/>
    <property type="chains" value="A/C/E=17-344, B/D/F=346-520"/>
</dbReference>
<dbReference type="PDB" id="6E56">
    <property type="method" value="X-ray"/>
    <property type="resolution" value="2.00 A"/>
    <property type="chains" value="A/D=53-335"/>
</dbReference>
<dbReference type="PDB" id="6N5D">
    <property type="method" value="X-ray"/>
    <property type="resolution" value="3.00 A"/>
    <property type="chains" value="A/B/K=53-334"/>
</dbReference>
<dbReference type="PDB" id="6N5E">
    <property type="method" value="X-ray"/>
    <property type="resolution" value="3.00 A"/>
    <property type="chains" value="A/B/C=53-334"/>
</dbReference>
<dbReference type="PDB" id="6XPX">
    <property type="method" value="X-ray"/>
    <property type="resolution" value="2.60 A"/>
    <property type="chains" value="A=53-335"/>
</dbReference>
<dbReference type="PDB" id="6Y5L">
    <property type="method" value="EM"/>
    <property type="resolution" value="3.60 A"/>
    <property type="chains" value="B/D/F=346-517"/>
</dbReference>
<dbReference type="PDB" id="7ZJ6">
    <property type="method" value="EM"/>
    <property type="resolution" value="2.60 A"/>
    <property type="chains" value="A/B/C=17-520"/>
</dbReference>
<dbReference type="PDB" id="7ZJ7">
    <property type="method" value="EM"/>
    <property type="resolution" value="3.95 A"/>
    <property type="chains" value="A/B/C=17-520"/>
</dbReference>
<dbReference type="PDB" id="7ZJ8">
    <property type="method" value="EM"/>
    <property type="resolution" value="3.10 A"/>
    <property type="chains" value="A/B/C=17-520"/>
</dbReference>
<dbReference type="PDB" id="8G5A">
    <property type="method" value="EM"/>
    <property type="resolution" value="3.30 A"/>
    <property type="chains" value="A/B/C=17-526"/>
</dbReference>
<dbReference type="PDB" id="8G5B">
    <property type="method" value="EM"/>
    <property type="resolution" value="3.10 A"/>
    <property type="chains" value="A=53-335"/>
</dbReference>
<dbReference type="PDB" id="8PK3">
    <property type="method" value="EM"/>
    <property type="resolution" value="3.40 A"/>
    <property type="chains" value="D/E/F=346-520"/>
</dbReference>
<dbReference type="PDBsum" id="1EO8"/>
<dbReference type="PDBsum" id="1FYT"/>
<dbReference type="PDBsum" id="1HA0"/>
<dbReference type="PDBsum" id="1HGG"/>
<dbReference type="PDBsum" id="1HTM"/>
<dbReference type="PDBsum" id="1J8H"/>
<dbReference type="PDBsum" id="1KEN"/>
<dbReference type="PDBsum" id="1KG0"/>
<dbReference type="PDBsum" id="1PYW"/>
<dbReference type="PDBsum" id="1QFU"/>
<dbReference type="PDBsum" id="1QU1"/>
<dbReference type="PDBsum" id="2HMG"/>
<dbReference type="PDBsum" id="2VIR"/>
<dbReference type="PDBsum" id="2VIS"/>
<dbReference type="PDBsum" id="2VIT"/>
<dbReference type="PDBsum" id="2VIU"/>
<dbReference type="PDBsum" id="2YPG"/>
<dbReference type="PDBsum" id="3EYM"/>
<dbReference type="PDBsum" id="3HMG"/>
<dbReference type="PDBsum" id="3S4S"/>
<dbReference type="PDBsum" id="3S5L"/>
<dbReference type="PDBsum" id="3VUN"/>
<dbReference type="PDBsum" id="4C56"/>
<dbReference type="PDBsum" id="4HMG"/>
<dbReference type="PDBsum" id="5HMG"/>
<dbReference type="PDBsum" id="6E56"/>
<dbReference type="PDBsum" id="6N5D"/>
<dbReference type="PDBsum" id="6N5E"/>
<dbReference type="PDBsum" id="6XPX"/>
<dbReference type="PDBsum" id="6Y5L"/>
<dbReference type="PDBsum" id="7ZJ6"/>
<dbReference type="PDBsum" id="7ZJ7"/>
<dbReference type="PDBsum" id="7ZJ8"/>
<dbReference type="PDBsum" id="8G5A"/>
<dbReference type="PDBsum" id="8G5B"/>
<dbReference type="PDBsum" id="8PK3"/>
<dbReference type="BMRB" id="P03437"/>
<dbReference type="EMDB" id="EMD-10696"/>
<dbReference type="EMDB" id="EMD-10697"/>
<dbReference type="EMDB" id="EMD-10698"/>
<dbReference type="EMDB" id="EMD-10699"/>
<dbReference type="EMDB" id="EMD-10700"/>
<dbReference type="EMDB" id="EMD-10701"/>
<dbReference type="EMDB" id="EMD-17724"/>
<dbReference type="EMDB" id="EMD-29738"/>
<dbReference type="SMR" id="P03437"/>
<dbReference type="DIP" id="DIP-45342N"/>
<dbReference type="IntAct" id="P03437">
    <property type="interactions" value="1"/>
</dbReference>
<dbReference type="BindingDB" id="P03437"/>
<dbReference type="ChEMBL" id="CHEMBL1932897"/>
<dbReference type="DrugBank" id="DB07726">
    <property type="generic name" value="t-Butylhydroquinone"/>
</dbReference>
<dbReference type="UniLectin" id="P03437"/>
<dbReference type="GlyCosmos" id="P03437">
    <property type="glycosylation" value="7 sites, No reported glycans"/>
</dbReference>
<dbReference type="ABCD" id="P03437">
    <property type="antibodies" value="15 sequenced antibodies"/>
</dbReference>
<dbReference type="EvolutionaryTrace" id="P03437"/>
<dbReference type="Proteomes" id="UP000137932">
    <property type="component" value="Genome"/>
</dbReference>
<dbReference type="GO" id="GO:0020002">
    <property type="term" value="C:host cell plasma membrane"/>
    <property type="evidence" value="ECO:0007669"/>
    <property type="project" value="UniProtKB-SubCell"/>
</dbReference>
<dbReference type="GO" id="GO:0016020">
    <property type="term" value="C:membrane"/>
    <property type="evidence" value="ECO:0007669"/>
    <property type="project" value="UniProtKB-UniRule"/>
</dbReference>
<dbReference type="GO" id="GO:0019031">
    <property type="term" value="C:viral envelope"/>
    <property type="evidence" value="ECO:0007669"/>
    <property type="project" value="UniProtKB-UniRule"/>
</dbReference>
<dbReference type="GO" id="GO:0055036">
    <property type="term" value="C:virion membrane"/>
    <property type="evidence" value="ECO:0007669"/>
    <property type="project" value="UniProtKB-SubCell"/>
</dbReference>
<dbReference type="GO" id="GO:0046789">
    <property type="term" value="F:host cell surface receptor binding"/>
    <property type="evidence" value="ECO:0007669"/>
    <property type="project" value="UniProtKB-UniRule"/>
</dbReference>
<dbReference type="GO" id="GO:0075512">
    <property type="term" value="P:clathrin-dependent endocytosis of virus by host cell"/>
    <property type="evidence" value="ECO:0007669"/>
    <property type="project" value="UniProtKB-UniRule"/>
</dbReference>
<dbReference type="GO" id="GO:0039654">
    <property type="term" value="P:fusion of virus membrane with host endosome membrane"/>
    <property type="evidence" value="ECO:0007669"/>
    <property type="project" value="UniProtKB-UniRule"/>
</dbReference>
<dbReference type="GO" id="GO:0019064">
    <property type="term" value="P:fusion of virus membrane with host plasma membrane"/>
    <property type="evidence" value="ECO:0007669"/>
    <property type="project" value="InterPro"/>
</dbReference>
<dbReference type="GO" id="GO:0046761">
    <property type="term" value="P:viral budding from plasma membrane"/>
    <property type="evidence" value="ECO:0007669"/>
    <property type="project" value="UniProtKB-UniRule"/>
</dbReference>
<dbReference type="GO" id="GO:0019062">
    <property type="term" value="P:virion attachment to host cell"/>
    <property type="evidence" value="ECO:0007669"/>
    <property type="project" value="UniProtKB-KW"/>
</dbReference>
<dbReference type="FunFam" id="3.90.20.10:FF:000001">
    <property type="entry name" value="Hemagglutinin"/>
    <property type="match status" value="1"/>
</dbReference>
<dbReference type="FunFam" id="3.90.209.20:FF:000001">
    <property type="entry name" value="Hemagglutinin"/>
    <property type="match status" value="1"/>
</dbReference>
<dbReference type="Gene3D" id="3.90.20.10">
    <property type="match status" value="1"/>
</dbReference>
<dbReference type="Gene3D" id="3.90.209.20">
    <property type="match status" value="1"/>
</dbReference>
<dbReference type="HAMAP" id="MF_04072">
    <property type="entry name" value="INFV_HEMA"/>
    <property type="match status" value="1"/>
</dbReference>
<dbReference type="InterPro" id="IPR008980">
    <property type="entry name" value="Capsid_hemagglutn"/>
</dbReference>
<dbReference type="InterPro" id="IPR013828">
    <property type="entry name" value="Hemagglutn_HA1_a/b_dom_sf"/>
</dbReference>
<dbReference type="InterPro" id="IPR000149">
    <property type="entry name" value="Hemagglutn_influenz_A"/>
</dbReference>
<dbReference type="InterPro" id="IPR001364">
    <property type="entry name" value="Hemagglutn_influenz_A/B"/>
</dbReference>
<dbReference type="Pfam" id="PF00509">
    <property type="entry name" value="Hemagglutinin"/>
    <property type="match status" value="1"/>
</dbReference>
<dbReference type="PRINTS" id="PR00330">
    <property type="entry name" value="HEMAGGLUTN1"/>
</dbReference>
<dbReference type="PRINTS" id="PR00329">
    <property type="entry name" value="HEMAGGLUTN12"/>
</dbReference>
<dbReference type="SUPFAM" id="SSF58064">
    <property type="entry name" value="Influenza hemagglutinin (stalk)"/>
    <property type="match status" value="1"/>
</dbReference>
<dbReference type="SUPFAM" id="SSF49818">
    <property type="entry name" value="Viral protein domain"/>
    <property type="match status" value="1"/>
</dbReference>
<organismHost>
    <name type="scientific">Aves</name>
    <dbReference type="NCBI Taxonomy" id="8782"/>
</organismHost>
<organismHost>
    <name type="scientific">Cetacea</name>
    <name type="common">whales</name>
    <dbReference type="NCBI Taxonomy" id="9721"/>
</organismHost>
<organismHost>
    <name type="scientific">Homo sapiens</name>
    <name type="common">Human</name>
    <dbReference type="NCBI Taxonomy" id="9606"/>
</organismHost>
<organismHost>
    <name type="scientific">Phocidae</name>
    <name type="common">true seals</name>
    <dbReference type="NCBI Taxonomy" id="9709"/>
</organismHost>
<organismHost>
    <name type="scientific">Sus scrofa</name>
    <name type="common">Pig</name>
    <dbReference type="NCBI Taxonomy" id="9823"/>
</organismHost>
<sequence length="566" mass="63416">MKTIIALSYIFCLALGQDLPGNDNSTATLCLGHHAVPNGTLVKTITDDQIEVTNATELVQSSSTGKICNNPHRILDGIDCTLIDALLGDPHCDVFQNETWDLFVERSKAFSNCYPYDVPDYASLRSLVASSGTLEFITEGFTWTGVTQNGGSNACKRGPGSGFFSRLNWLTKSGSTYPVLNVTMPNNDNFDKLYIWGIHHPSTNQEQTSLYVQASGRVTVSTRRSQQTIIPNIGSRPWVRGLSSRISIYWTIVKPGDVLVINSNGNLIAPRGYFKMRTGKSSIMRSDAPIDTCISECITPNGSIPNDKPFQNVNKITYGACPKYVKQNTLKLATGMRNVPEKQTRGLFGAIAGFIENGWEGMIDGWYGFRHQNSEGTGQAADLKSTQAAIDQINGKLNRVIEKTNEKFHQIEKEFSEVEGRIQDLEKYVEDTKIDLWSYNAELLVALENQHTIDLTDSEMNKLFEKTRRQLRENAEEMGNGCFKIYHKCDNACIESIRNGTYDHDVYRDEALNNRFQIKGVELKSGYKDWILWISFAISCFLLCVVLLGFIMWACQRGNIRCNICI</sequence>
<comment type="function">
    <text>Binds to sialic acid-containing receptors on the cell surface, bringing about the attachment of the virus particle to the cell. This attachment induces virion internalization of about two third of the virus particles through clathrin-dependent endocytosis and about one third through a clathrin- and caveolin-independent pathway. Plays a major role in the determination of host range restriction and virulence. Class I viral fusion protein. Responsible for penetration of the virus into the cell cytoplasm by mediating the fusion of the membrane of the endocytosed virus particle with the endosomal membrane. Low pH in endosomes induces an irreversible conformational change in HA2, releasing the fusion hydrophobic peptide. Several trimers are required to form a competent fusion pore.</text>
</comment>
<comment type="function">
    <text evidence="1">Binds to sialic acid-containing receptors on the cell surface, bringing about the attachment of the virus particle to the cell. This attachment induces virion internalization either through clathrin-dependent endocytosis or through clathrin- and caveolin-independent pathway. Plays a major role in the determination of host range restriction and virulence. Class I viral fusion protein. Responsible for penetration of the virus into the cell cytoplasm by mediating the fusion of the membrane of the endocytosed virus particle with the endosomal membrane. Low pH in endosomes induces an irreversible conformational change in HA2, releasing the fusion hydrophobic peptide. Several trimers are required to form a competent fusion pore.</text>
</comment>
<comment type="subunit">
    <text evidence="1">Homotrimer of disulfide-linked HA1-HA2.</text>
</comment>
<comment type="subcellular location">
    <subcellularLocation>
        <location evidence="1">Virion membrane</location>
        <topology evidence="1">Single-pass type I membrane protein</topology>
    </subcellularLocation>
    <subcellularLocation>
        <location evidence="1">Host apical cell membrane</location>
        <topology evidence="1">Single-pass type I membrane protein</topology>
    </subcellularLocation>
    <text evidence="1">Targeted to the apical plasma membrane in epithelial polarized cells through a signal present in the transmembrane domain. Associated with glycosphingolipid- and cholesterol-enriched detergent-resistant lipid rafts.</text>
</comment>
<comment type="PTM">
    <text evidence="1">Palmitoylated.</text>
</comment>
<comment type="PTM">
    <text evidence="1 2">In natural infection, inactive HA is matured into HA1 and HA2 outside the cell by one or more trypsin-like, arginine-specific endoprotease secreted by the bronchial epithelial cells. One identified protease that may be involved in this process is secreted in lungs by club cells.</text>
</comment>
<comment type="miscellaneous">
    <text>Major glycoprotein, comprises over 80% of the envelope proteins present in virus particle.</text>
</comment>
<comment type="miscellaneous">
    <text>The extent of infection into host organism is determined by HA. Influenza viruses bud from the apical surface of polarized epithelial cells (e.g. bronchial epithelial cells) into lumen of lungs and are therefore usually pneumotropic. The reason is that HA is cleaved by tryptase clara which is restricted to lungs. However, HAs of H5 and H7 pantropic avian viruses subtypes can be cleaved by furin and subtilisin-type enzymes, allowing the virus to grow in other organs than lungs.</text>
</comment>
<comment type="miscellaneous">
    <text evidence="3">The influenza A genome consist of 8 RNA segments. Genetic variation of hemagglutinin and/or neuraminidase genes results in the emergence of new influenza strains. The mechanism of variation can be the result of point mutations or the result of genetic reassortment between segments of two different strains.</text>
</comment>
<comment type="similarity">
    <text evidence="1">Belongs to the influenza viruses hemagglutinin family.</text>
</comment>
<proteinExistence type="evidence at protein level"/>
<reference key="1">
    <citation type="journal article" date="1980" name="Nature">
        <title>Antigenic drift between the haemagglutinin of the Hong Kong influenza strains A/Aichi/2/68 and A/Victoria/3/75.</title>
        <authorList>
            <person name="Verhoeyen M."/>
            <person name="Fang R."/>
            <person name="Jou W.M."/>
            <person name="Devos R."/>
            <person name="Huylebroeck D."/>
            <person name="Saman E."/>
            <person name="Fiers W."/>
        </authorList>
    </citation>
    <scope>NUCLEOTIDE SEQUENCE [GENOMIC RNA]</scope>
</reference>
<reference key="2">
    <citation type="book" date="1981" name="Symposium of the Society for General Microbiology">
        <title>Shift and drift in influenza viruses.</title>
        <editorList>
            <person name="Carlile M.J."/>
            <person name="Collins J.F."/>
            <person name="Moseley B.E.B."/>
        </editorList>
        <authorList>
            <person name="Min J.W."/>
            <person name="Verhoeyen M."/>
            <person name="Fang R.-X."/>
            <person name="Devos R."/>
            <person name="Huylebroeck D."/>
            <person name="Fiers W."/>
        </authorList>
    </citation>
    <scope>NUCLEOTIDE SEQUENCE [GENOMIC RNA]</scope>
</reference>
<reference key="3">
    <citation type="journal article" date="2004" name="J. Virol.">
        <title>Effect of the addition of oligosaccharides on the biological activities and antigenicity of influenza A/H3N2 virus hemagglutinin.</title>
        <authorList>
            <person name="Abe Y."/>
            <person name="Takashita E."/>
            <person name="Sugawara K."/>
            <person name="Matsuzaki Y."/>
            <person name="Muraki Y."/>
            <person name="Hongo S."/>
        </authorList>
    </citation>
    <scope>NUCLEOTIDE SEQUENCE [GENOMIC RNA]</scope>
</reference>
<reference key="4">
    <citation type="journal article" date="1997" name="J. Biochem.">
        <title>Human mucus protease inhibitor in airway fluids is a potential defensive compound against infection with influenza A and Sendai viruses.</title>
        <authorList>
            <person name="Beppu Y."/>
            <person name="Imamura Y."/>
            <person name="Tashiro M."/>
            <person name="Towatari T."/>
            <person name="Ariga H."/>
            <person name="Kido H."/>
        </authorList>
    </citation>
    <scope>CLEAVAGE</scope>
</reference>
<reference key="5">
    <citation type="journal article" date="1981" name="Nature">
        <title>Structure of the haemagglutinin membrane glycoprotein of influenza virus at 3-A resolution.</title>
        <authorList>
            <person name="Wilson I.A."/>
            <person name="Skehel J.J."/>
            <person name="Wiley D.C."/>
        </authorList>
    </citation>
    <scope>X-RAY CRYSTALLOGRAPHY (3.0 ANGSTROMS)</scope>
</reference>
<reference key="6">
    <citation type="journal article" date="1988" name="Nature">
        <title>Structure of the influenza virus haemagglutinin complexed with its receptor, sialic acid.</title>
        <authorList>
            <person name="Weis W.I."/>
            <person name="Brown J.H."/>
            <person name="Cusack S.C."/>
            <person name="Paulson J.C."/>
            <person name="Skehel J.J."/>
            <person name="Wiley D.C."/>
        </authorList>
    </citation>
    <scope>X-RAY CRYSTALLOGRAPHY (2.9 ANGSTROMS)</scope>
</reference>
<reference key="7">
    <citation type="journal article" date="1990" name="EMBO J.">
        <title>The structure of a membrane fusion mutant of the influenza virus haemagglutinin.</title>
        <authorList>
            <person name="Weis W.I."/>
            <person name="Cusack S.C."/>
            <person name="Brown J.H."/>
            <person name="Daniels R.S."/>
            <person name="Skehel J.J."/>
            <person name="Wiley D.C."/>
        </authorList>
    </citation>
    <scope>X-RAY CRYSTALLOGRAPHY (3.0 ANGSTROMS) OF A MUTANT WITH GLY-457</scope>
</reference>
<reference key="8">
    <citation type="journal article" date="1990" name="J. Mol. Biol.">
        <title>Refinement of the influenza virus hemagglutinin by simulated annealing.</title>
        <authorList>
            <person name="Weis W.I."/>
            <person name="Bruenger A.T."/>
            <person name="Skehel J.J."/>
            <person name="Wiley D.C."/>
        </authorList>
    </citation>
    <scope>X-RAY CRYSTALLOGRAPHY (2.9 ANGSTROMS)</scope>
</reference>
<reference key="9">
    <citation type="journal article" date="1994" name="Nature">
        <title>Structure of influenza haemagglutinin at the pH of membrane fusion.</title>
        <authorList>
            <person name="Bullough P.A."/>
            <person name="Hughson F.M."/>
            <person name="Skehel J.J."/>
            <person name="Wiley D.C."/>
        </authorList>
    </citation>
    <scope>X-RAY CRYSTALLOGRAPHY (2.5 ANGSTROMS)</scope>
</reference>
<reference key="10">
    <citation type="journal article" date="1998" name="Nat. Struct. Biol.">
        <title>Antigen distortion allows influenza virus to escape neutralization.</title>
        <authorList>
            <person name="Fleury D."/>
            <person name="Wharton S.A."/>
            <person name="Skehel J.J."/>
            <person name="Knossow M."/>
            <person name="Bizebard T."/>
        </authorList>
    </citation>
    <scope>X-RAY CRYSTALLOGRAPHY (3.25 ANGSTROMS)</scope>
</reference>
<accession>P03437</accession>
<accession>A0PC85</accession>
<accession>Q67132</accession>
<name>HEMA_I68A0</name>
<feature type="signal peptide" evidence="1">
    <location>
        <begin position="1"/>
        <end position="16"/>
    </location>
</feature>
<feature type="chain" id="PRO_0000440411" description="Hemagglutinin" evidence="1">
    <location>
        <begin position="17"/>
        <end position="566"/>
    </location>
</feature>
<feature type="chain" id="PRO_0000038885" description="Hemagglutinin HA1 chain">
    <location>
        <begin position="17"/>
        <end position="344"/>
    </location>
</feature>
<feature type="chain" id="PRO_0000038886" description="Hemagglutinin HA2 chain" evidence="1">
    <location>
        <begin position="346"/>
        <end position="566"/>
    </location>
</feature>
<feature type="topological domain" description="Extracellular" evidence="1">
    <location>
        <begin position="17"/>
        <end position="530"/>
    </location>
</feature>
<feature type="transmembrane region" description="Helical" evidence="1">
    <location>
        <begin position="531"/>
        <end position="551"/>
    </location>
</feature>
<feature type="topological domain" description="Cytoplasmic" evidence="1">
    <location>
        <begin position="552"/>
        <end position="566"/>
    </location>
</feature>
<feature type="site" description="Cleavage; by host" evidence="1">
    <location>
        <begin position="345"/>
        <end position="346"/>
    </location>
</feature>
<feature type="lipid moiety-binding region" description="S-palmitoyl cysteine; by host" evidence="1">
    <location>
        <position position="555"/>
    </location>
</feature>
<feature type="lipid moiety-binding region" description="S-palmitoyl cysteine; by host" evidence="1">
    <location>
        <position position="562"/>
    </location>
</feature>
<feature type="lipid moiety-binding region" description="S-palmitoyl cysteine; by host" evidence="1">
    <location>
        <position position="565"/>
    </location>
</feature>
<feature type="glycosylation site" description="N-linked (GlcNAc...) asparagine; by host" evidence="1">
    <location>
        <position position="24"/>
    </location>
</feature>
<feature type="glycosylation site" description="N-linked (GlcNAc...) asparagine; by host" evidence="1">
    <location>
        <position position="38"/>
    </location>
</feature>
<feature type="glycosylation site" description="N-linked (GlcNAc...) asparagine; by host" evidence="1">
    <location>
        <position position="54"/>
    </location>
</feature>
<feature type="glycosylation site" description="N-linked (GlcNAc...) asparagine; by host" evidence="1">
    <location>
        <position position="97"/>
    </location>
</feature>
<feature type="glycosylation site" description="N-linked (GlcNAc...) asparagine; by host" evidence="1">
    <location>
        <position position="181"/>
    </location>
</feature>
<feature type="glycosylation site" description="N-linked (GlcNAc...) asparagine; by host" evidence="1">
    <location>
        <position position="301"/>
    </location>
</feature>
<feature type="glycosylation site" description="N-linked (GlcNAc...) asparagine; by host" evidence="1">
    <location>
        <position position="499"/>
    </location>
</feature>
<feature type="disulfide bond" description="Interchain (between HA1 and HA2 chains)" evidence="1">
    <location>
        <begin position="30"/>
        <end position="482"/>
    </location>
</feature>
<feature type="disulfide bond" evidence="1">
    <location>
        <begin position="68"/>
        <end position="293"/>
    </location>
</feature>
<feature type="disulfide bond" evidence="1">
    <location>
        <begin position="80"/>
        <end position="92"/>
    </location>
</feature>
<feature type="disulfide bond" evidence="1">
    <location>
        <begin position="113"/>
        <end position="155"/>
    </location>
</feature>
<feature type="disulfide bond" evidence="1">
    <location>
        <begin position="297"/>
        <end position="321"/>
    </location>
</feature>
<feature type="disulfide bond" evidence="1">
    <location>
        <begin position="489"/>
        <end position="493"/>
    </location>
</feature>
<feature type="sequence conflict" description="In Ref. 2; AAA43239." evidence="3" ref="2">
    <original>A</original>
    <variation>P</variation>
    <location>
        <position position="14"/>
    </location>
</feature>
<feature type="sequence conflict" description="In Ref. 3; BAF37221." evidence="3" ref="3">
    <original>L</original>
    <variation>I</variation>
    <location>
        <position position="15"/>
    </location>
</feature>
<feature type="sequence conflict" description="In Ref. 3; BAF37221." evidence="3" ref="3">
    <original>G</original>
    <variation>S</variation>
    <location>
        <position position="160"/>
    </location>
</feature>
<feature type="sequence conflict" description="In Ref. 3; BAF37221." evidence="3" ref="3">
    <original>I</original>
    <variation>V</variation>
    <location>
        <position position="198"/>
    </location>
</feature>
<feature type="sequence conflict" description="In Ref. 3; BAF37221." evidence="3" ref="3">
    <original>R</original>
    <variation>G</variation>
    <location>
        <position position="240"/>
    </location>
</feature>
<feature type="sequence conflict" description="In Ref. 3; BAF37221." evidence="3" ref="3">
    <original>E</original>
    <variation>D</variation>
    <location>
        <position position="477"/>
    </location>
</feature>
<feature type="strand" evidence="9">
    <location>
        <begin position="27"/>
        <end position="35"/>
    </location>
</feature>
<feature type="strand" evidence="9">
    <location>
        <begin position="40"/>
        <end position="42"/>
    </location>
</feature>
<feature type="strand" evidence="9">
    <location>
        <begin position="50"/>
        <end position="53"/>
    </location>
</feature>
<feature type="strand" evidence="9">
    <location>
        <begin position="55"/>
        <end position="57"/>
    </location>
</feature>
<feature type="strand" evidence="10">
    <location>
        <begin position="65"/>
        <end position="68"/>
    </location>
</feature>
<feature type="strand" evidence="10">
    <location>
        <begin position="70"/>
        <end position="72"/>
    </location>
</feature>
<feature type="strand" evidence="10">
    <location>
        <begin position="74"/>
        <end position="76"/>
    </location>
</feature>
<feature type="helix" evidence="10">
    <location>
        <begin position="82"/>
        <end position="87"/>
    </location>
</feature>
<feature type="helix" evidence="10">
    <location>
        <begin position="90"/>
        <end position="95"/>
    </location>
</feature>
<feature type="strand" evidence="10">
    <location>
        <begin position="101"/>
        <end position="105"/>
    </location>
</feature>
<feature type="strand" evidence="10">
    <location>
        <begin position="116"/>
        <end position="118"/>
    </location>
</feature>
<feature type="helix" evidence="10">
    <location>
        <begin position="121"/>
        <end position="131"/>
    </location>
</feature>
<feature type="strand" evidence="10">
    <location>
        <begin position="136"/>
        <end position="138"/>
    </location>
</feature>
<feature type="strand" evidence="12">
    <location>
        <begin position="145"/>
        <end position="147"/>
    </location>
</feature>
<feature type="strand" evidence="10">
    <location>
        <begin position="152"/>
        <end position="157"/>
    </location>
</feature>
<feature type="strand" evidence="10">
    <location>
        <begin position="160"/>
        <end position="162"/>
    </location>
</feature>
<feature type="strand" evidence="10">
    <location>
        <begin position="167"/>
        <end position="169"/>
    </location>
</feature>
<feature type="strand" evidence="10">
    <location>
        <begin position="171"/>
        <end position="173"/>
    </location>
</feature>
<feature type="strand" evidence="10">
    <location>
        <begin position="180"/>
        <end position="185"/>
    </location>
</feature>
<feature type="strand" evidence="10">
    <location>
        <begin position="188"/>
        <end position="190"/>
    </location>
</feature>
<feature type="strand" evidence="10">
    <location>
        <begin position="192"/>
        <end position="200"/>
    </location>
</feature>
<feature type="helix" evidence="10">
    <location>
        <begin position="204"/>
        <end position="211"/>
    </location>
</feature>
<feature type="strand" evidence="10">
    <location>
        <begin position="212"/>
        <end position="215"/>
    </location>
</feature>
<feature type="strand" evidence="10">
    <location>
        <begin position="217"/>
        <end position="221"/>
    </location>
</feature>
<feature type="strand" evidence="10">
    <location>
        <begin position="226"/>
        <end position="229"/>
    </location>
</feature>
<feature type="strand" evidence="11">
    <location>
        <begin position="239"/>
        <end position="241"/>
    </location>
</feature>
<feature type="strand" evidence="10">
    <location>
        <begin position="245"/>
        <end position="253"/>
    </location>
</feature>
<feature type="strand" evidence="10">
    <location>
        <begin position="258"/>
        <end position="265"/>
    </location>
</feature>
<feature type="strand" evidence="10">
    <location>
        <begin position="267"/>
        <end position="275"/>
    </location>
</feature>
<feature type="strand" evidence="10">
    <location>
        <begin position="282"/>
        <end position="285"/>
    </location>
</feature>
<feature type="strand" evidence="10">
    <location>
        <begin position="290"/>
        <end position="292"/>
    </location>
</feature>
<feature type="strand" evidence="10">
    <location>
        <begin position="296"/>
        <end position="299"/>
    </location>
</feature>
<feature type="strand" evidence="10">
    <location>
        <begin position="302"/>
        <end position="304"/>
    </location>
</feature>
<feature type="strand" evidence="10">
    <location>
        <begin position="308"/>
        <end position="311"/>
    </location>
</feature>
<feature type="strand" evidence="10">
    <location>
        <begin position="318"/>
        <end position="320"/>
    </location>
</feature>
<feature type="strand" evidence="9">
    <location>
        <begin position="331"/>
        <end position="333"/>
    </location>
</feature>
<feature type="strand" evidence="4">
    <location>
        <begin position="337"/>
        <end position="339"/>
    </location>
</feature>
<feature type="turn" evidence="9">
    <location>
        <begin position="352"/>
        <end position="354"/>
    </location>
</feature>
<feature type="strand" evidence="13">
    <location>
        <begin position="355"/>
        <end position="357"/>
    </location>
</feature>
<feature type="strand" evidence="13">
    <location>
        <begin position="359"/>
        <end position="361"/>
    </location>
</feature>
<feature type="strand" evidence="9">
    <location>
        <begin position="366"/>
        <end position="373"/>
    </location>
</feature>
<feature type="strand" evidence="9">
    <location>
        <begin position="376"/>
        <end position="382"/>
    </location>
</feature>
<feature type="helix" evidence="8">
    <location>
        <begin position="383"/>
        <end position="449"/>
    </location>
</feature>
<feature type="strand" evidence="6">
    <location>
        <begin position="455"/>
        <end position="457"/>
    </location>
</feature>
<feature type="helix" evidence="8">
    <location>
        <begin position="458"/>
        <end position="470"/>
    </location>
</feature>
<feature type="helix" evidence="9">
    <location>
        <begin position="472"/>
        <end position="474"/>
    </location>
</feature>
<feature type="strand" evidence="8">
    <location>
        <begin position="475"/>
        <end position="479"/>
    </location>
</feature>
<feature type="strand" evidence="7">
    <location>
        <begin position="485"/>
        <end position="487"/>
    </location>
</feature>
<feature type="helix" evidence="8">
    <location>
        <begin position="491"/>
        <end position="499"/>
    </location>
</feature>
<feature type="helix" evidence="9">
    <location>
        <begin position="504"/>
        <end position="515"/>
    </location>
</feature>
<feature type="turn" evidence="5">
    <location>
        <begin position="516"/>
        <end position="519"/>
    </location>
</feature>
<feature type="strand" evidence="8">
    <location>
        <begin position="524"/>
        <end position="526"/>
    </location>
</feature>
<gene>
    <name evidence="1" type="primary">HA</name>
</gene>
<keyword id="KW-0002">3D-structure</keyword>
<keyword id="KW-1167">Clathrin- and caveolin-independent endocytosis of virus by host</keyword>
<keyword id="KW-1165">Clathrin-mediated endocytosis of virus by host</keyword>
<keyword id="KW-1015">Disulfide bond</keyword>
<keyword id="KW-1170">Fusion of virus membrane with host endosomal membrane</keyword>
<keyword id="KW-1168">Fusion of virus membrane with host membrane</keyword>
<keyword id="KW-0325">Glycoprotein</keyword>
<keyword id="KW-0348">Hemagglutinin</keyword>
<keyword id="KW-1032">Host cell membrane</keyword>
<keyword id="KW-1043">Host membrane</keyword>
<keyword id="KW-0945">Host-virus interaction</keyword>
<keyword id="KW-0449">Lipoprotein</keyword>
<keyword id="KW-0472">Membrane</keyword>
<keyword id="KW-0564">Palmitate</keyword>
<keyword id="KW-1185">Reference proteome</keyword>
<keyword id="KW-0732">Signal</keyword>
<keyword id="KW-0812">Transmembrane</keyword>
<keyword id="KW-1133">Transmembrane helix</keyword>
<keyword id="KW-1161">Viral attachment to host cell</keyword>
<keyword id="KW-0261">Viral envelope protein</keyword>
<keyword id="KW-1162">Viral penetration into host cytoplasm</keyword>
<keyword id="KW-0946">Virion</keyword>
<keyword id="KW-1164">Virus endocytosis by host</keyword>
<keyword id="KW-1160">Virus entry into host cell</keyword>
<protein>
    <recommendedName>
        <fullName evidence="1">Hemagglutinin</fullName>
    </recommendedName>
    <component>
        <recommendedName>
            <fullName evidence="1">Hemagglutinin HA1 chain</fullName>
        </recommendedName>
    </component>
    <component>
        <recommendedName>
            <fullName evidence="1">Hemagglutinin HA2 chain</fullName>
        </recommendedName>
    </component>
</protein>
<evidence type="ECO:0000255" key="1">
    <source>
        <dbReference type="HAMAP-Rule" id="MF_04072"/>
    </source>
</evidence>
<evidence type="ECO:0000269" key="2">
    <source>
    </source>
</evidence>
<evidence type="ECO:0000305" key="3"/>
<evidence type="ECO:0007829" key="4">
    <source>
        <dbReference type="PDB" id="1HA0"/>
    </source>
</evidence>
<evidence type="ECO:0007829" key="5">
    <source>
        <dbReference type="PDB" id="1HGG"/>
    </source>
</evidence>
<evidence type="ECO:0007829" key="6">
    <source>
        <dbReference type="PDB" id="1HTM"/>
    </source>
</evidence>
<evidence type="ECO:0007829" key="7">
    <source>
        <dbReference type="PDB" id="1KEN"/>
    </source>
</evidence>
<evidence type="ECO:0007829" key="8">
    <source>
        <dbReference type="PDB" id="1QU1"/>
    </source>
</evidence>
<evidence type="ECO:0007829" key="9">
    <source>
        <dbReference type="PDB" id="2VIU"/>
    </source>
</evidence>
<evidence type="ECO:0007829" key="10">
    <source>
        <dbReference type="PDB" id="6E56"/>
    </source>
</evidence>
<evidence type="ECO:0007829" key="11">
    <source>
        <dbReference type="PDB" id="6N5E"/>
    </source>
</evidence>
<evidence type="ECO:0007829" key="12">
    <source>
        <dbReference type="PDB" id="7ZJ6"/>
    </source>
</evidence>
<evidence type="ECO:0007829" key="13">
    <source>
        <dbReference type="PDB" id="8G5A"/>
    </source>
</evidence>
<organism>
    <name type="scientific">Influenza A virus (strain A/Aichi/2/1968 H3N2)</name>
    <dbReference type="NCBI Taxonomy" id="387139"/>
    <lineage>
        <taxon>Viruses</taxon>
        <taxon>Riboviria</taxon>
        <taxon>Orthornavirae</taxon>
        <taxon>Negarnaviricota</taxon>
        <taxon>Polyploviricotina</taxon>
        <taxon>Insthoviricetes</taxon>
        <taxon>Articulavirales</taxon>
        <taxon>Orthomyxoviridae</taxon>
        <taxon>Alphainfluenzavirus</taxon>
        <taxon>Alphainfluenzavirus influenzae</taxon>
        <taxon>Influenza A virus</taxon>
    </lineage>
</organism>